<accession>A8ZVQ3</accession>
<dbReference type="EMBL" id="CP000859">
    <property type="protein sequence ID" value="ABW68240.1"/>
    <property type="molecule type" value="Genomic_DNA"/>
</dbReference>
<dbReference type="RefSeq" id="WP_012175852.1">
    <property type="nucleotide sequence ID" value="NC_009943.1"/>
</dbReference>
<dbReference type="SMR" id="A8ZVQ3"/>
<dbReference type="STRING" id="96561.Dole_2436"/>
<dbReference type="KEGG" id="dol:Dole_2436"/>
<dbReference type="eggNOG" id="COG0268">
    <property type="taxonomic scope" value="Bacteria"/>
</dbReference>
<dbReference type="HOGENOM" id="CLU_160655_3_1_7"/>
<dbReference type="OrthoDB" id="9807974at2"/>
<dbReference type="Proteomes" id="UP000008561">
    <property type="component" value="Chromosome"/>
</dbReference>
<dbReference type="GO" id="GO:0005829">
    <property type="term" value="C:cytosol"/>
    <property type="evidence" value="ECO:0007669"/>
    <property type="project" value="TreeGrafter"/>
</dbReference>
<dbReference type="GO" id="GO:0015935">
    <property type="term" value="C:small ribosomal subunit"/>
    <property type="evidence" value="ECO:0007669"/>
    <property type="project" value="TreeGrafter"/>
</dbReference>
<dbReference type="GO" id="GO:0070181">
    <property type="term" value="F:small ribosomal subunit rRNA binding"/>
    <property type="evidence" value="ECO:0007669"/>
    <property type="project" value="TreeGrafter"/>
</dbReference>
<dbReference type="GO" id="GO:0003735">
    <property type="term" value="F:structural constituent of ribosome"/>
    <property type="evidence" value="ECO:0007669"/>
    <property type="project" value="InterPro"/>
</dbReference>
<dbReference type="GO" id="GO:0006412">
    <property type="term" value="P:translation"/>
    <property type="evidence" value="ECO:0007669"/>
    <property type="project" value="UniProtKB-UniRule"/>
</dbReference>
<dbReference type="Gene3D" id="1.20.58.110">
    <property type="entry name" value="Ribosomal protein S20"/>
    <property type="match status" value="1"/>
</dbReference>
<dbReference type="HAMAP" id="MF_00500">
    <property type="entry name" value="Ribosomal_bS20"/>
    <property type="match status" value="1"/>
</dbReference>
<dbReference type="InterPro" id="IPR002583">
    <property type="entry name" value="Ribosomal_bS20"/>
</dbReference>
<dbReference type="InterPro" id="IPR036510">
    <property type="entry name" value="Ribosomal_bS20_sf"/>
</dbReference>
<dbReference type="NCBIfam" id="TIGR00029">
    <property type="entry name" value="S20"/>
    <property type="match status" value="1"/>
</dbReference>
<dbReference type="PANTHER" id="PTHR33398">
    <property type="entry name" value="30S RIBOSOMAL PROTEIN S20"/>
    <property type="match status" value="1"/>
</dbReference>
<dbReference type="PANTHER" id="PTHR33398:SF1">
    <property type="entry name" value="SMALL RIBOSOMAL SUBUNIT PROTEIN BS20C"/>
    <property type="match status" value="1"/>
</dbReference>
<dbReference type="Pfam" id="PF01649">
    <property type="entry name" value="Ribosomal_S20p"/>
    <property type="match status" value="1"/>
</dbReference>
<dbReference type="SUPFAM" id="SSF46992">
    <property type="entry name" value="Ribosomal protein S20"/>
    <property type="match status" value="1"/>
</dbReference>
<proteinExistence type="inferred from homology"/>
<comment type="function">
    <text evidence="1">Binds directly to 16S ribosomal RNA.</text>
</comment>
<comment type="similarity">
    <text evidence="1">Belongs to the bacterial ribosomal protein bS20 family.</text>
</comment>
<feature type="chain" id="PRO_1000126434" description="Small ribosomal subunit protein bS20">
    <location>
        <begin position="1"/>
        <end position="88"/>
    </location>
</feature>
<feature type="region of interest" description="Disordered" evidence="2">
    <location>
        <begin position="1"/>
        <end position="24"/>
    </location>
</feature>
<feature type="compositionally biased region" description="Basic residues" evidence="2">
    <location>
        <begin position="1"/>
        <end position="10"/>
    </location>
</feature>
<protein>
    <recommendedName>
        <fullName evidence="1">Small ribosomal subunit protein bS20</fullName>
    </recommendedName>
    <alternativeName>
        <fullName evidence="3">30S ribosomal protein S20</fullName>
    </alternativeName>
</protein>
<keyword id="KW-1185">Reference proteome</keyword>
<keyword id="KW-0687">Ribonucleoprotein</keyword>
<keyword id="KW-0689">Ribosomal protein</keyword>
<keyword id="KW-0694">RNA-binding</keyword>
<keyword id="KW-0699">rRNA-binding</keyword>
<gene>
    <name evidence="1" type="primary">rpsT</name>
    <name type="ordered locus">Dole_2436</name>
</gene>
<evidence type="ECO:0000255" key="1">
    <source>
        <dbReference type="HAMAP-Rule" id="MF_00500"/>
    </source>
</evidence>
<evidence type="ECO:0000256" key="2">
    <source>
        <dbReference type="SAM" id="MobiDB-lite"/>
    </source>
</evidence>
<evidence type="ECO:0000305" key="3"/>
<sequence>MANHKSSLKRAKQDIVRNTRNKSRKTALKTITKKVDALVADGAAEDAKTTLLAAQKLFDQTAAKGTIHKKTASRKISRLTRRVNAAAK</sequence>
<reference key="1">
    <citation type="submission" date="2007-10" db="EMBL/GenBank/DDBJ databases">
        <title>Complete sequence of Desulfococcus oleovorans Hxd3.</title>
        <authorList>
            <consortium name="US DOE Joint Genome Institute"/>
            <person name="Copeland A."/>
            <person name="Lucas S."/>
            <person name="Lapidus A."/>
            <person name="Barry K."/>
            <person name="Glavina del Rio T."/>
            <person name="Dalin E."/>
            <person name="Tice H."/>
            <person name="Pitluck S."/>
            <person name="Kiss H."/>
            <person name="Brettin T."/>
            <person name="Bruce D."/>
            <person name="Detter J.C."/>
            <person name="Han C."/>
            <person name="Schmutz J."/>
            <person name="Larimer F."/>
            <person name="Land M."/>
            <person name="Hauser L."/>
            <person name="Kyrpides N."/>
            <person name="Kim E."/>
            <person name="Wawrik B."/>
            <person name="Richardson P."/>
        </authorList>
    </citation>
    <scope>NUCLEOTIDE SEQUENCE [LARGE SCALE GENOMIC DNA]</scope>
    <source>
        <strain>DSM 6200 / JCM 39069 / Hxd3</strain>
    </source>
</reference>
<name>RS20_DESOH</name>
<organism>
    <name type="scientific">Desulfosudis oleivorans (strain DSM 6200 / JCM 39069 / Hxd3)</name>
    <name type="common">Desulfococcus oleovorans</name>
    <dbReference type="NCBI Taxonomy" id="96561"/>
    <lineage>
        <taxon>Bacteria</taxon>
        <taxon>Pseudomonadati</taxon>
        <taxon>Thermodesulfobacteriota</taxon>
        <taxon>Desulfobacteria</taxon>
        <taxon>Desulfobacterales</taxon>
        <taxon>Desulfosudaceae</taxon>
        <taxon>Desulfosudis</taxon>
    </lineage>
</organism>